<accession>P24169</accession>
<proteinExistence type="evidence at protein level"/>
<feature type="chain" id="PRO_0000201135" description="Inducible ornithine decarboxylase">
    <location>
        <begin position="1"/>
        <end position="732"/>
    </location>
</feature>
<feature type="modified residue" description="N6-(pyridoxal phosphate)lysine" evidence="1">
    <location>
        <position position="355"/>
    </location>
</feature>
<dbReference type="EC" id="4.1.1.17" evidence="2"/>
<dbReference type="EMBL" id="M64495">
    <property type="protein sequence ID" value="AAA62785.1"/>
    <property type="molecule type" value="Genomic_DNA"/>
</dbReference>
<dbReference type="EMBL" id="U00096">
    <property type="protein sequence ID" value="AAC73787.1"/>
    <property type="molecule type" value="Genomic_DNA"/>
</dbReference>
<dbReference type="EMBL" id="AP009048">
    <property type="protein sequence ID" value="BAA35349.1"/>
    <property type="molecule type" value="Genomic_DNA"/>
</dbReference>
<dbReference type="PIR" id="A40839">
    <property type="entry name" value="A40839"/>
</dbReference>
<dbReference type="RefSeq" id="NP_415220.1">
    <property type="nucleotide sequence ID" value="NC_000913.3"/>
</dbReference>
<dbReference type="RefSeq" id="WP_000040195.1">
    <property type="nucleotide sequence ID" value="NZ_LN832404.1"/>
</dbReference>
<dbReference type="SMR" id="P24169"/>
<dbReference type="BioGRID" id="4261018">
    <property type="interactions" value="21"/>
</dbReference>
<dbReference type="DIP" id="DIP-154N"/>
<dbReference type="FunCoup" id="P24169">
    <property type="interactions" value="267"/>
</dbReference>
<dbReference type="IntAct" id="P24169">
    <property type="interactions" value="4"/>
</dbReference>
<dbReference type="STRING" id="511145.b0693"/>
<dbReference type="PaxDb" id="511145-b0693"/>
<dbReference type="EnsemblBacteria" id="AAC73787">
    <property type="protein sequence ID" value="AAC73787"/>
    <property type="gene ID" value="b0693"/>
</dbReference>
<dbReference type="GeneID" id="945297"/>
<dbReference type="KEGG" id="ecj:JW0680"/>
<dbReference type="KEGG" id="eco:b0693"/>
<dbReference type="KEGG" id="ecoc:C3026_03455"/>
<dbReference type="PATRIC" id="fig|1411691.4.peg.1583"/>
<dbReference type="EchoBASE" id="EB0957"/>
<dbReference type="eggNOG" id="COG1982">
    <property type="taxonomic scope" value="Bacteria"/>
</dbReference>
<dbReference type="HOGENOM" id="CLU_014292_3_0_6"/>
<dbReference type="InParanoid" id="P24169"/>
<dbReference type="OMA" id="HIKGQPR"/>
<dbReference type="OrthoDB" id="9761189at2"/>
<dbReference type="PhylomeDB" id="P24169"/>
<dbReference type="BioCyc" id="EcoCyc:ORNDECARBOXDEG-MONOMER"/>
<dbReference type="BioCyc" id="MetaCyc:ORNDECARBOXDEG-MONOMER"/>
<dbReference type="UniPathway" id="UPA00535">
    <property type="reaction ID" value="UER00288"/>
</dbReference>
<dbReference type="PRO" id="PR:P24169"/>
<dbReference type="Proteomes" id="UP000000625">
    <property type="component" value="Chromosome"/>
</dbReference>
<dbReference type="GO" id="GO:0005829">
    <property type="term" value="C:cytosol"/>
    <property type="evidence" value="ECO:0000318"/>
    <property type="project" value="GO_Central"/>
</dbReference>
<dbReference type="GO" id="GO:0004586">
    <property type="term" value="F:ornithine decarboxylase activity"/>
    <property type="evidence" value="ECO:0000314"/>
    <property type="project" value="EcoCyc"/>
</dbReference>
<dbReference type="GO" id="GO:0042803">
    <property type="term" value="F:protein homodimerization activity"/>
    <property type="evidence" value="ECO:0000314"/>
    <property type="project" value="EcoCyc"/>
</dbReference>
<dbReference type="GO" id="GO:0030170">
    <property type="term" value="F:pyridoxal phosphate binding"/>
    <property type="evidence" value="ECO:0000314"/>
    <property type="project" value="EcoCyc"/>
</dbReference>
<dbReference type="GO" id="GO:0071468">
    <property type="term" value="P:cellular response to acidic pH"/>
    <property type="evidence" value="ECO:0000270"/>
    <property type="project" value="EcoCyc"/>
</dbReference>
<dbReference type="GO" id="GO:0033387">
    <property type="term" value="P:putrescine biosynthetic process from arginine, via ornithine"/>
    <property type="evidence" value="ECO:0007669"/>
    <property type="project" value="UniProtKB-UniPathway"/>
</dbReference>
<dbReference type="GO" id="GO:0008295">
    <property type="term" value="P:spermidine biosynthetic process"/>
    <property type="evidence" value="ECO:0007669"/>
    <property type="project" value="UniProtKB-KW"/>
</dbReference>
<dbReference type="CDD" id="cd00615">
    <property type="entry name" value="Orn_deC_like"/>
    <property type="match status" value="1"/>
</dbReference>
<dbReference type="FunFam" id="3.40.640.10:FF:000008">
    <property type="entry name" value="Lysine decarboxylase, inducible"/>
    <property type="match status" value="1"/>
</dbReference>
<dbReference type="FunFam" id="3.90.100.10:FF:000001">
    <property type="entry name" value="Lysine decarboxylase, inducible"/>
    <property type="match status" value="1"/>
</dbReference>
<dbReference type="FunFam" id="3.90.1150.10:FF:000032">
    <property type="entry name" value="Ornithine decarboxylase SpeF"/>
    <property type="match status" value="1"/>
</dbReference>
<dbReference type="Gene3D" id="3.40.50.220">
    <property type="match status" value="1"/>
</dbReference>
<dbReference type="Gene3D" id="3.90.1150.10">
    <property type="entry name" value="Aspartate Aminotransferase, domain 1"/>
    <property type="match status" value="1"/>
</dbReference>
<dbReference type="Gene3D" id="3.90.100.10">
    <property type="entry name" value="Orn/Lys/Arg decarboxylase, C-terminal domain"/>
    <property type="match status" value="1"/>
</dbReference>
<dbReference type="Gene3D" id="3.40.640.10">
    <property type="entry name" value="Type I PLP-dependent aspartate aminotransferase-like (Major domain)"/>
    <property type="match status" value="1"/>
</dbReference>
<dbReference type="InterPro" id="IPR011006">
    <property type="entry name" value="CheY-like_superfamily"/>
</dbReference>
<dbReference type="InterPro" id="IPR027568">
    <property type="entry name" value="ODC_inducible"/>
</dbReference>
<dbReference type="InterPro" id="IPR005308">
    <property type="entry name" value="OKR_de-COase_N"/>
</dbReference>
<dbReference type="InterPro" id="IPR011193">
    <property type="entry name" value="Orn/lys/arg_de-COase"/>
</dbReference>
<dbReference type="InterPro" id="IPR000310">
    <property type="entry name" value="Orn/Lys/Arg_deCO2ase_major_dom"/>
</dbReference>
<dbReference type="InterPro" id="IPR027464">
    <property type="entry name" value="Ornithine_deCO2ase_N"/>
</dbReference>
<dbReference type="InterPro" id="IPR008286">
    <property type="entry name" value="Prn/Lys/Arg_de-COase_C"/>
</dbReference>
<dbReference type="InterPro" id="IPR036633">
    <property type="entry name" value="Prn/Lys/Arg_de-COase_C_sf"/>
</dbReference>
<dbReference type="InterPro" id="IPR015424">
    <property type="entry name" value="PyrdxlP-dep_Trfase"/>
</dbReference>
<dbReference type="InterPro" id="IPR015421">
    <property type="entry name" value="PyrdxlP-dep_Trfase_major"/>
</dbReference>
<dbReference type="InterPro" id="IPR015422">
    <property type="entry name" value="PyrdxlP-dep_Trfase_small"/>
</dbReference>
<dbReference type="NCBIfam" id="TIGR04301">
    <property type="entry name" value="ODC_inducible"/>
    <property type="match status" value="1"/>
</dbReference>
<dbReference type="NCBIfam" id="NF010092">
    <property type="entry name" value="PRK13578.1"/>
    <property type="match status" value="1"/>
</dbReference>
<dbReference type="PANTHER" id="PTHR45229">
    <property type="entry name" value="CONSTITUTIVE ORNITHINE DECARBOXYLASE"/>
    <property type="match status" value="1"/>
</dbReference>
<dbReference type="PANTHER" id="PTHR45229:SF1">
    <property type="entry name" value="INDUCIBLE ORNITHINE DECARBOXYLASE"/>
    <property type="match status" value="1"/>
</dbReference>
<dbReference type="Pfam" id="PF01276">
    <property type="entry name" value="OKR_DC_1"/>
    <property type="match status" value="1"/>
</dbReference>
<dbReference type="Pfam" id="PF03711">
    <property type="entry name" value="OKR_DC_1_C"/>
    <property type="match status" value="1"/>
</dbReference>
<dbReference type="Pfam" id="PF03709">
    <property type="entry name" value="OKR_DC_1_N"/>
    <property type="match status" value="1"/>
</dbReference>
<dbReference type="PIRSF" id="PIRSF009393">
    <property type="entry name" value="Orn_decarb"/>
    <property type="match status" value="1"/>
</dbReference>
<dbReference type="SUPFAM" id="SSF52172">
    <property type="entry name" value="CheY-like"/>
    <property type="match status" value="1"/>
</dbReference>
<dbReference type="SUPFAM" id="SSF55904">
    <property type="entry name" value="Ornithine decarboxylase C-terminal domain"/>
    <property type="match status" value="1"/>
</dbReference>
<dbReference type="SUPFAM" id="SSF53383">
    <property type="entry name" value="PLP-dependent transferases"/>
    <property type="match status" value="1"/>
</dbReference>
<dbReference type="PROSITE" id="PS00703">
    <property type="entry name" value="OKR_DC_1"/>
    <property type="match status" value="1"/>
</dbReference>
<protein>
    <recommendedName>
        <fullName>Inducible ornithine decarboxylase</fullName>
        <ecNumber evidence="2">4.1.1.17</ecNumber>
    </recommendedName>
</protein>
<comment type="function">
    <text evidence="5">The first enzyme leading to putrescine and thus polyamine synthesis.</text>
</comment>
<comment type="catalytic activity">
    <reaction evidence="2">
        <text>L-ornithine + H(+) = putrescine + CO2</text>
        <dbReference type="Rhea" id="RHEA:22964"/>
        <dbReference type="ChEBI" id="CHEBI:15378"/>
        <dbReference type="ChEBI" id="CHEBI:16526"/>
        <dbReference type="ChEBI" id="CHEBI:46911"/>
        <dbReference type="ChEBI" id="CHEBI:326268"/>
        <dbReference type="EC" id="4.1.1.17"/>
    </reaction>
</comment>
<comment type="cofactor">
    <cofactor>
        <name>pyridoxal 5'-phosphate</name>
        <dbReference type="ChEBI" id="CHEBI:597326"/>
    </cofactor>
</comment>
<comment type="biophysicochemical properties">
    <phDependence>
        <text evidence="2">Optimum pH is 7.0.</text>
    </phDependence>
</comment>
<comment type="pathway">
    <text>Amine and polyamine biosynthesis; putrescine biosynthesis via L-ornithine pathway; putrescine from L-ornithine: step 1/1.</text>
</comment>
<comment type="induction">
    <text evidence="2 3 6">Induced at low environmental pH (at protein level). Part of the speFL-speF-potE operon (PubMed:1939141). Expression induced by ornithine (at protein level) (Probable) (PubMed:32094585).</text>
</comment>
<comment type="similarity">
    <text evidence="5">Belongs to the Orn/Lys/Arg decarboxylase class-I family.</text>
</comment>
<sequence length="732" mass="82416">MSKLKIAVSDSCPDCFTTQRECIYINESRNIDVAAIVLSLNDVTCGKLDEIDATGYGIPVFIATENQERVPAEYLPRISGVFENCESRREFYGRQLETAASHYETQLRPPFFRALVDYVNQGNSAFDCPGHQGGEFFRRHPAGNQFVEYFGEALFRADLCNADVAMGDLLIHEGAPCIAQQHAAKVFNADKTYFVLNGTSSSNKVVLNALLTPGDLVLFDRNNHKSNHHGALLQAGATPVYLETARNPYGFIGGIDAHCFEESYLRELIAEVAPQRAKEARPFRLAVIQLGTYDGTIYNARQVVDKIGHLCDYILFDSAWVGYEQFIPMMADCSPLLLDLNENDPGILVTQSVHKQQAGFSQTSQIHKKDSHIKGQQRYVPHKRMNNAFMMHASTSPFYPLFAALNINAKMHEGVSGRNMWMDCVVNGINARKLILDNCQHIRPFVPELVDGKPWQSYETAQIAVDLRFFQFVPGEHWHSFEGYAENQYFVDPCKLLLTTPGIDARNGEYEAFGVPATILANFLRENGVVPEKCDLNSILFLLTPAEDMAKLQQLVALLVRFEKLLESDAPLAEVLPSIYKQHEERYAGYTLRQLCQEMHDLYARHNVKQLQKEMFRKEHFPRVSMNPQEANYAYLRGEVELVRLPDAEGRIAAEGALPYPPGVLCVVPGEIWGGAVLRYFSALEEGINLLPGFAPELQGVYIEEHDGRKQVWCYVIKPRDAQSTLLKGEKL</sequence>
<name>DCOS_ECOLI</name>
<organism>
    <name type="scientific">Escherichia coli (strain K12)</name>
    <dbReference type="NCBI Taxonomy" id="83333"/>
    <lineage>
        <taxon>Bacteria</taxon>
        <taxon>Pseudomonadati</taxon>
        <taxon>Pseudomonadota</taxon>
        <taxon>Gammaproteobacteria</taxon>
        <taxon>Enterobacterales</taxon>
        <taxon>Enterobacteriaceae</taxon>
        <taxon>Escherichia</taxon>
    </lineage>
</organism>
<gene>
    <name evidence="4" type="primary">speF</name>
    <name type="ordered locus">b0693</name>
    <name type="ordered locus">JW0680</name>
</gene>
<evidence type="ECO:0000250" key="1"/>
<evidence type="ECO:0000269" key="2">
    <source>
    </source>
</evidence>
<evidence type="ECO:0000269" key="3">
    <source>
    </source>
</evidence>
<evidence type="ECO:0000303" key="4">
    <source>
    </source>
</evidence>
<evidence type="ECO:0000305" key="5"/>
<evidence type="ECO:0000305" key="6">
    <source>
    </source>
</evidence>
<keyword id="KW-0210">Decarboxylase</keyword>
<keyword id="KW-0456">Lyase</keyword>
<keyword id="KW-0663">Pyridoxal phosphate</keyword>
<keyword id="KW-1185">Reference proteome</keyword>
<keyword id="KW-0745">Spermidine biosynthesis</keyword>
<reference key="1">
    <citation type="journal article" date="1991" name="J. Biol. Chem.">
        <title>Coexistence of the genes for putrescine transport protein and ornithine decarboxylase at 16 min on Escherichia coli chromosome.</title>
        <authorList>
            <person name="Kashiwagi K."/>
            <person name="Suzuki T."/>
            <person name="Suzuki F."/>
            <person name="Furuchi T."/>
            <person name="Kobayashi H."/>
            <person name="Igarashi K."/>
        </authorList>
    </citation>
    <scope>NUCLEOTIDE SEQUENCE [GENOMIC DNA]</scope>
    <scope>FUNCTION AS AN ORNITHINE DECARBOXYLASE</scope>
    <scope>CATALYTIC ACTIVITY</scope>
    <scope>BIOPHYSICOCHEMICAL PROPERTIES</scope>
    <scope>INDUCTION</scope>
    <scope>OPERON</scope>
    <source>
        <strain>K12 / 3000/ DR112</strain>
    </source>
</reference>
<reference key="2">
    <citation type="journal article" date="1996" name="DNA Res.">
        <title>A 718-kb DNA sequence of the Escherichia coli K-12 genome corresponding to the 12.7-28.0 min region on the linkage map.</title>
        <authorList>
            <person name="Oshima T."/>
            <person name="Aiba H."/>
            <person name="Baba T."/>
            <person name="Fujita K."/>
            <person name="Hayashi K."/>
            <person name="Honjo A."/>
            <person name="Ikemoto K."/>
            <person name="Inada T."/>
            <person name="Itoh T."/>
            <person name="Kajihara M."/>
            <person name="Kanai K."/>
            <person name="Kashimoto K."/>
            <person name="Kimura S."/>
            <person name="Kitagawa M."/>
            <person name="Makino K."/>
            <person name="Masuda S."/>
            <person name="Miki T."/>
            <person name="Mizobuchi K."/>
            <person name="Mori H."/>
            <person name="Motomura K."/>
            <person name="Nakamura Y."/>
            <person name="Nashimoto H."/>
            <person name="Nishio Y."/>
            <person name="Saito N."/>
            <person name="Sampei G."/>
            <person name="Seki Y."/>
            <person name="Tagami H."/>
            <person name="Takemoto K."/>
            <person name="Wada C."/>
            <person name="Yamamoto Y."/>
            <person name="Yano M."/>
            <person name="Horiuchi T."/>
        </authorList>
    </citation>
    <scope>NUCLEOTIDE SEQUENCE [LARGE SCALE GENOMIC DNA]</scope>
    <source>
        <strain>K12 / W3110 / ATCC 27325 / DSM 5911</strain>
    </source>
</reference>
<reference key="3">
    <citation type="journal article" date="1997" name="Science">
        <title>The complete genome sequence of Escherichia coli K-12.</title>
        <authorList>
            <person name="Blattner F.R."/>
            <person name="Plunkett G. III"/>
            <person name="Bloch C.A."/>
            <person name="Perna N.T."/>
            <person name="Burland V."/>
            <person name="Riley M."/>
            <person name="Collado-Vides J."/>
            <person name="Glasner J.D."/>
            <person name="Rode C.K."/>
            <person name="Mayhew G.F."/>
            <person name="Gregor J."/>
            <person name="Davis N.W."/>
            <person name="Kirkpatrick H.A."/>
            <person name="Goeden M.A."/>
            <person name="Rose D.J."/>
            <person name="Mau B."/>
            <person name="Shao Y."/>
        </authorList>
    </citation>
    <scope>NUCLEOTIDE SEQUENCE [LARGE SCALE GENOMIC DNA]</scope>
    <source>
        <strain>K12 / MG1655 / ATCC 47076</strain>
    </source>
</reference>
<reference key="4">
    <citation type="journal article" date="2006" name="Mol. Syst. Biol.">
        <title>Highly accurate genome sequences of Escherichia coli K-12 strains MG1655 and W3110.</title>
        <authorList>
            <person name="Hayashi K."/>
            <person name="Morooka N."/>
            <person name="Yamamoto Y."/>
            <person name="Fujita K."/>
            <person name="Isono K."/>
            <person name="Choi S."/>
            <person name="Ohtsubo E."/>
            <person name="Baba T."/>
            <person name="Wanner B.L."/>
            <person name="Mori H."/>
            <person name="Horiuchi T."/>
        </authorList>
    </citation>
    <scope>NUCLEOTIDE SEQUENCE [LARGE SCALE GENOMIC DNA]</scope>
    <source>
        <strain>K12 / W3110 / ATCC 27325 / DSM 5911</strain>
    </source>
</reference>
<reference key="5">
    <citation type="journal article" date="2020" name="Nat. Microbiol.">
        <title>Ornithine capture by a translating ribosome controls bacterial polyamine synthesis.</title>
        <authorList>
            <person name="Herrero Del Valle A."/>
            <person name="Seip B."/>
            <person name="Cervera-Marzal I."/>
            <person name="Sacheau G."/>
            <person name="Seefeldt A.C."/>
            <person name="Innis C.A."/>
        </authorList>
    </citation>
    <scope>INDUCTION</scope>
    <source>
        <strain>MRE-600</strain>
    </source>
</reference>